<organism>
    <name type="scientific">Brucella abortus biovar 1 (strain 9-941)</name>
    <dbReference type="NCBI Taxonomy" id="262698"/>
    <lineage>
        <taxon>Bacteria</taxon>
        <taxon>Pseudomonadati</taxon>
        <taxon>Pseudomonadota</taxon>
        <taxon>Alphaproteobacteria</taxon>
        <taxon>Hyphomicrobiales</taxon>
        <taxon>Brucellaceae</taxon>
        <taxon>Brucella/Ochrobactrum group</taxon>
        <taxon>Brucella</taxon>
    </lineage>
</organism>
<name>RL36_BRUAB</name>
<protein>
    <recommendedName>
        <fullName evidence="1">Large ribosomal subunit protein bL36</fullName>
    </recommendedName>
    <alternativeName>
        <fullName evidence="2">50S ribosomal protein L36</fullName>
    </alternativeName>
</protein>
<dbReference type="EMBL" id="AE017223">
    <property type="protein sequence ID" value="AAX75049.1"/>
    <property type="molecule type" value="Genomic_DNA"/>
</dbReference>
<dbReference type="SMR" id="Q57BD5"/>
<dbReference type="EnsemblBacteria" id="AAX75049">
    <property type="protein sequence ID" value="AAX75049"/>
    <property type="gene ID" value="BruAb1_1731"/>
</dbReference>
<dbReference type="KEGG" id="bmb:BruAb1_1731"/>
<dbReference type="HOGENOM" id="CLU_135723_3_2_5"/>
<dbReference type="Proteomes" id="UP000000540">
    <property type="component" value="Chromosome I"/>
</dbReference>
<dbReference type="GO" id="GO:1990904">
    <property type="term" value="C:ribonucleoprotein complex"/>
    <property type="evidence" value="ECO:0007669"/>
    <property type="project" value="UniProtKB-KW"/>
</dbReference>
<dbReference type="GO" id="GO:0005840">
    <property type="term" value="C:ribosome"/>
    <property type="evidence" value="ECO:0007669"/>
    <property type="project" value="UniProtKB-KW"/>
</dbReference>
<dbReference type="GO" id="GO:0003735">
    <property type="term" value="F:structural constituent of ribosome"/>
    <property type="evidence" value="ECO:0007669"/>
    <property type="project" value="InterPro"/>
</dbReference>
<dbReference type="GO" id="GO:0006412">
    <property type="term" value="P:translation"/>
    <property type="evidence" value="ECO:0007669"/>
    <property type="project" value="UniProtKB-UniRule"/>
</dbReference>
<dbReference type="HAMAP" id="MF_00251">
    <property type="entry name" value="Ribosomal_bL36"/>
    <property type="match status" value="1"/>
</dbReference>
<dbReference type="InterPro" id="IPR000473">
    <property type="entry name" value="Ribosomal_bL36"/>
</dbReference>
<dbReference type="InterPro" id="IPR035977">
    <property type="entry name" value="Ribosomal_bL36_sp"/>
</dbReference>
<dbReference type="InterPro" id="IPR047621">
    <property type="entry name" value="Ribosomal_L36_bact"/>
</dbReference>
<dbReference type="NCBIfam" id="NF002021">
    <property type="entry name" value="PRK00831.1"/>
    <property type="match status" value="1"/>
</dbReference>
<dbReference type="NCBIfam" id="TIGR01022">
    <property type="entry name" value="rpmJ_bact"/>
    <property type="match status" value="1"/>
</dbReference>
<dbReference type="PANTHER" id="PTHR47781">
    <property type="entry name" value="50S RIBOSOMAL PROTEIN L36 2"/>
    <property type="match status" value="1"/>
</dbReference>
<dbReference type="PANTHER" id="PTHR47781:SF1">
    <property type="entry name" value="LARGE RIBOSOMAL SUBUNIT PROTEIN BL36B"/>
    <property type="match status" value="1"/>
</dbReference>
<dbReference type="Pfam" id="PF00444">
    <property type="entry name" value="Ribosomal_L36"/>
    <property type="match status" value="1"/>
</dbReference>
<dbReference type="SUPFAM" id="SSF57840">
    <property type="entry name" value="Ribosomal protein L36"/>
    <property type="match status" value="1"/>
</dbReference>
<dbReference type="PROSITE" id="PS00828">
    <property type="entry name" value="RIBOSOMAL_L36"/>
    <property type="match status" value="1"/>
</dbReference>
<gene>
    <name evidence="1" type="primary">rpmJ</name>
    <name type="ordered locus">BruAb1_1731</name>
</gene>
<sequence length="41" mass="4851">MKIKNSLKALKARHRDCQLVRRKGRVYIINKTAPRFKARQG</sequence>
<keyword id="KW-0687">Ribonucleoprotein</keyword>
<keyword id="KW-0689">Ribosomal protein</keyword>
<evidence type="ECO:0000255" key="1">
    <source>
        <dbReference type="HAMAP-Rule" id="MF_00251"/>
    </source>
</evidence>
<evidence type="ECO:0000305" key="2"/>
<comment type="similarity">
    <text evidence="1">Belongs to the bacterial ribosomal protein bL36 family.</text>
</comment>
<feature type="chain" id="PRO_0000302166" description="Large ribosomal subunit protein bL36">
    <location>
        <begin position="1"/>
        <end position="41"/>
    </location>
</feature>
<reference key="1">
    <citation type="journal article" date="2005" name="J. Bacteriol.">
        <title>Completion of the genome sequence of Brucella abortus and comparison to the highly similar genomes of Brucella melitensis and Brucella suis.</title>
        <authorList>
            <person name="Halling S.M."/>
            <person name="Peterson-Burch B.D."/>
            <person name="Bricker B.J."/>
            <person name="Zuerner R.L."/>
            <person name="Qing Z."/>
            <person name="Li L.-L."/>
            <person name="Kapur V."/>
            <person name="Alt D.P."/>
            <person name="Olsen S.C."/>
        </authorList>
    </citation>
    <scope>NUCLEOTIDE SEQUENCE [LARGE SCALE GENOMIC DNA]</scope>
    <source>
        <strain>9-941</strain>
    </source>
</reference>
<accession>Q57BD5</accession>
<proteinExistence type="inferred from homology"/>